<organism>
    <name type="scientific">Phyllomedusa trinitatis</name>
    <name type="common">Trinidad leaf frog</name>
    <dbReference type="NCBI Taxonomy" id="332092"/>
    <lineage>
        <taxon>Eukaryota</taxon>
        <taxon>Metazoa</taxon>
        <taxon>Chordata</taxon>
        <taxon>Craniata</taxon>
        <taxon>Vertebrata</taxon>
        <taxon>Euteleostomi</taxon>
        <taxon>Amphibia</taxon>
        <taxon>Batrachia</taxon>
        <taxon>Anura</taxon>
        <taxon>Neobatrachia</taxon>
        <taxon>Hyloidea</taxon>
        <taxon>Hylidae</taxon>
        <taxon>Phyllomedusinae</taxon>
        <taxon>Phyllomedusa</taxon>
    </lineage>
</organism>
<accession>C0HLD9</accession>
<reference key="1">
    <citation type="journal article" date="2018" name="Comp. Biochem. Physiol.">
        <title>Peptidomic analysis of the host-defense peptides in skin secretions of the Trinidadian leaf frog Phyllomedusa trinitatis (Phyllomedusidae).</title>
        <authorList>
            <person name="Mechkarska M."/>
            <person name="Coquet L."/>
            <person name="Leprince J."/>
            <person name="Auguste R.J."/>
            <person name="Jouenne T."/>
            <person name="Mangoni M.L."/>
            <person name="Conlon J.M."/>
        </authorList>
    </citation>
    <scope>PROTEIN SEQUENCE</scope>
    <scope>FUNCTION</scope>
    <scope>SYNTHESIS</scope>
    <scope>SUBCELLULAR LOCATION</scope>
    <scope>MASS SPECTROMETRY</scope>
    <scope>AMIDATION AT LEU-19</scope>
    <source>
        <tissue>Skin secretion</tissue>
    </source>
</reference>
<reference key="2">
    <citation type="journal article" date="2019" name="J. Pept. Sci.">
        <title>Immunomodulatory, insulinotropic, and cytotoxic activities of phylloseptins and plasticin-TR from the Trinidanian leaf frog Phyllomedusa trinitatis.</title>
        <authorList>
            <person name="Pantic J."/>
            <person name="Guilhaudis L."/>
            <person name="Musale V."/>
            <person name="Attoub S."/>
            <person name="Lukic M.L."/>
            <person name="Mechkarska M."/>
            <person name="Conlon J.M."/>
        </authorList>
    </citation>
    <scope>FUNCTION</scope>
    <scope>SYNTHESIS</scope>
</reference>
<proteinExistence type="evidence at protein level"/>
<comment type="function">
    <text evidence="1 2">Antimicrobial peptide with weak activity against fungus C.albicans ATCC 24433 (MIC=100 uM) (PubMed:29980138). Not active against Gram-negative bacterium E.coli ATCC 25922 and Gram-positive bacterium S.epidermidis ATCC 12228 at concentrations up to 100 uM (PubMed:29980138). Has an anti-inflammatory effect, since it inhibits the production of the pro-inflammatory cytokines TNF-alpha, and induces the production of the anti-inflammatory cytokine IL-10 (PubMed:30734396). Has high activity of stimulation of insulin release, which may protect the species from being eaten by predators by causing fatal hypoglycemia (PubMed:30734396). Is cytotoxic to cancer line cells (PubMed:30734396). Shows low hemolysis on mouse erythrocytes (LC(50)=110 uM) (PubMed:30734396).</text>
</comment>
<comment type="subcellular location">
    <subcellularLocation>
        <location evidence="1">Secreted</location>
    </subcellularLocation>
</comment>
<comment type="tissue specificity">
    <text evidence="5">Expressed by the skin glands.</text>
</comment>
<comment type="mass spectrometry"/>
<comment type="similarity">
    <text evidence="4">Belongs to the frog skin active peptide (FSAP) family. Phylloseptin subfamily.</text>
</comment>
<comment type="online information" name="The antimicrobial peptide database">
    <link uri="https://wangapd3.com/database/query_output.php?ID=02993"/>
</comment>
<protein>
    <recommendedName>
        <fullName evidence="3">Phylloseptin-3.2TR</fullName>
        <shortName evidence="4">PLS-3.2TR</shortName>
    </recommendedName>
</protein>
<sequence>FFSMIPKIATGIASLVKDL</sequence>
<name>PLS32_PHYTB</name>
<keyword id="KW-0027">Amidation</keyword>
<keyword id="KW-0878">Amphibian defense peptide</keyword>
<keyword id="KW-0929">Antimicrobial</keyword>
<keyword id="KW-0204">Cytolysis</keyword>
<keyword id="KW-0903">Direct protein sequencing</keyword>
<keyword id="KW-0295">Fungicide</keyword>
<keyword id="KW-0354">Hemolysis</keyword>
<keyword id="KW-0391">Immunity</keyword>
<keyword id="KW-0399">Innate immunity</keyword>
<keyword id="KW-0964">Secreted</keyword>
<feature type="peptide" id="PRO_0000445200" description="Phylloseptin-3.2TR" evidence="1">
    <location>
        <begin position="1"/>
        <end position="19"/>
    </location>
</feature>
<feature type="modified residue" description="Leucine amide" evidence="1">
    <location>
        <position position="19"/>
    </location>
</feature>
<dbReference type="GO" id="GO:0005576">
    <property type="term" value="C:extracellular region"/>
    <property type="evidence" value="ECO:0007669"/>
    <property type="project" value="UniProtKB-SubCell"/>
</dbReference>
<dbReference type="GO" id="GO:0050832">
    <property type="term" value="P:defense response to fungus"/>
    <property type="evidence" value="ECO:0007669"/>
    <property type="project" value="UniProtKB-KW"/>
</dbReference>
<dbReference type="GO" id="GO:0045087">
    <property type="term" value="P:innate immune response"/>
    <property type="evidence" value="ECO:0007669"/>
    <property type="project" value="UniProtKB-KW"/>
</dbReference>
<dbReference type="GO" id="GO:0031640">
    <property type="term" value="P:killing of cells of another organism"/>
    <property type="evidence" value="ECO:0007669"/>
    <property type="project" value="UniProtKB-KW"/>
</dbReference>
<evidence type="ECO:0000269" key="1">
    <source>
    </source>
</evidence>
<evidence type="ECO:0000269" key="2">
    <source>
    </source>
</evidence>
<evidence type="ECO:0000303" key="3">
    <source>
    </source>
</evidence>
<evidence type="ECO:0000305" key="4"/>
<evidence type="ECO:0000305" key="5">
    <source>
    </source>
</evidence>